<accession>Q96JX3</accession>
<accession>Q49AT1</accession>
<accession>Q5VTX3</accession>
<accession>Q6PKF3</accession>
<keyword id="KW-0025">Alternative splicing</keyword>
<keyword id="KW-0209">Deafness</keyword>
<keyword id="KW-0225">Disease variant</keyword>
<keyword id="KW-0256">Endoplasmic reticulum</keyword>
<keyword id="KW-0444">Lipid biosynthesis</keyword>
<keyword id="KW-0443">Lipid metabolism</keyword>
<keyword id="KW-0472">Membrane</keyword>
<keyword id="KW-0496">Mitochondrion</keyword>
<keyword id="KW-0594">Phospholipid biosynthesis</keyword>
<keyword id="KW-1208">Phospholipid metabolism</keyword>
<keyword id="KW-1267">Proteomics identification</keyword>
<keyword id="KW-1185">Reference proteome</keyword>
<keyword id="KW-0812">Transmembrane</keyword>
<keyword id="KW-1133">Transmembrane helix</keyword>
<gene>
    <name type="primary">SERAC1</name>
</gene>
<sequence>MSLAAYCVICCRRIGTSTSPPKSGTHWRDIRNIIKFTGSLILGGSLFLTYEVLALKKAVTLDTQVVEREKMKSYIYVHTVSLDKGENHGIAWQARKELHKAVRKVLATSAKILRNPFADPFSTVDIEDHECAVWLLLRKSKSDDKTTRLEAVREMSETHHWHDYQYRIIAQACDPKTLIGLARSEESDLRFFLLPPPLPSLKEDSSTEEELRQLLASLPQTELDECIQYFTSLALSESSQSLAAQKGGLWCFGGNGLPYAESFGEVPSATVEMFCLEAIVKHSEISTHCDKIEANGGLQLLQRLYRLHKDCPKVQRNIMRVIGNMALNEHLHSSIVRSGWVSIMAEAMKSPHIMESSHAARILANLDRETVQEKYQDGVYVLHPQYRTSQPIKADVLFIHGLMGAAFKTWRQQDSEQAVIEKPMEDEDRYTTCWPKTWLAKDCPALRIISVEYDTSLSDWRARCPMERKSIAFRSNELLRKLRAAGVGDRPVVWISHSMGGLLVKKMLLEASTKPEMSTVINNTRGIIFYSVPHHGSRLAEYSVNIRYLLFPSLEVKELSKDSPALKTLQDDFLEFAKDKNFQVLNFVETLPTYIGSMIKLHVVPVESADLGIGDLIPVDVNHLNICKPKKKDAFLYQRTLQFIREALAKDLEN</sequence>
<comment type="function">
    <text evidence="4 7">Facilitates the transport of serine from the cytosol to the mitochondria by interacting with and stabilizing Sideroflexin-1 (SFXN1), a mitochondrial serine transporter, playing a fundamental role in the one-carbon cycle responsible for the synthesis of nucleotides needed for mitochondrial DNA replication (PubMed:35235340). Plays an important role in the phosphatidylglycerol (PG) remodeling that is essential for both mitochondrial function and intracellular cholesterol trafficking (PubMed:22683713). Specifically involved in the exchange of the sn-1 acyl chain from PG 16:0/18:1(9Z) (also known as 1-hexadecanoyl-2-(9Z-octadecenoyl)-sn-glycero-3-phospho-(1'-sn-glycerol)) to PG 18:0/18:1(9Z) (also known as 1-octadecanoyl-2-(9Z-octadecenoyl)-sn-glycero-3-phospho-(1'-sn-glycerol)), a step needed in the bis(monoacylglycerol)phosphate biosynthetic pathway (PubMed:22683713). May have acyltransferase activity although the mechanism for PG remodeling has not been determined (PubMed:22683713).</text>
</comment>
<comment type="subcellular location">
    <subcellularLocation>
        <location evidence="1">Mitochondrion membrane</location>
        <topology evidence="9">Single-pass membrane protein</topology>
    </subcellularLocation>
    <subcellularLocation>
        <location evidence="4">Endoplasmic reticulum</location>
    </subcellularLocation>
    <subcellularLocation>
        <location evidence="4">Mitochondrion</location>
    </subcellularLocation>
    <text evidence="4">Localizes at the endoplasmic reticulum and at the endoplasmic reticulum-mitochondria interface.</text>
</comment>
<comment type="alternative products">
    <event type="alternative splicing"/>
    <isoform>
        <id>Q96JX3-1</id>
        <name>1</name>
        <sequence type="displayed"/>
    </isoform>
    <isoform>
        <id>Q96JX3-2</id>
        <name>2</name>
        <sequence type="described" ref="VSP_022859 VSP_022860"/>
    </isoform>
    <isoform>
        <id>Q96JX3-3</id>
        <name>3</name>
        <sequence type="described" ref="VSP_022857 VSP_022858"/>
    </isoform>
</comment>
<comment type="tissue specificity">
    <text evidence="4 7">Widely expressed, with predominant expression in skeletal muscle and brain (PubMed:22683713, PubMed:35235340). In the brain, highest levels are found in the frontal and occipital cortices, cerebellum and hippocampus (PubMed:22683713).</text>
</comment>
<comment type="disease" evidence="4 5 6">
    <disease id="DI-03495">
        <name>3-methylglutaconic aciduria with deafness, encephalopathy, and Leigh-like syndrome</name>
        <acronym>MEGDEL</acronym>
        <description>An autosomal recessive disorder characterized by childhood onset of delayed psychomotor development or psychomotor regression, sensorineural deafness, spasticity or dystonia, and increased excretion of 3-methylglutaconic acid. Brain imaging shows cerebral and cerebellar atrophy as well as lesions in the basal ganglia reminiscent of Leigh syndrome. Laboratory studies show increased serum lactate and alanine, mitochondrial oxidative phosphorylation defects, abnormal mitochondria, abnormal phosphatidylglycerol and cardiolipin profiles in fibroblasts, and abnormal accumulation of unesterified cholesterol within cells.</description>
        <dbReference type="MIM" id="614739"/>
    </disease>
    <text>The disease is caused by variants affecting the gene represented in this entry.</text>
</comment>
<comment type="similarity">
    <text evidence="9">Belongs to the SERAC1 family.</text>
</comment>
<evidence type="ECO:0000250" key="1">
    <source>
        <dbReference type="UniProtKB" id="Q3U213"/>
    </source>
</evidence>
<evidence type="ECO:0000255" key="2"/>
<evidence type="ECO:0000269" key="3">
    <source>
    </source>
</evidence>
<evidence type="ECO:0000269" key="4">
    <source>
    </source>
</evidence>
<evidence type="ECO:0000269" key="5">
    <source>
    </source>
</evidence>
<evidence type="ECO:0000269" key="6">
    <source>
    </source>
</evidence>
<evidence type="ECO:0000269" key="7">
    <source>
    </source>
</evidence>
<evidence type="ECO:0000303" key="8">
    <source>
    </source>
</evidence>
<evidence type="ECO:0000305" key="9"/>
<proteinExistence type="evidence at protein level"/>
<reference key="1">
    <citation type="journal article" date="2004" name="Nat. Genet.">
        <title>Complete sequencing and characterization of 21,243 full-length human cDNAs.</title>
        <authorList>
            <person name="Ota T."/>
            <person name="Suzuki Y."/>
            <person name="Nishikawa T."/>
            <person name="Otsuki T."/>
            <person name="Sugiyama T."/>
            <person name="Irie R."/>
            <person name="Wakamatsu A."/>
            <person name="Hayashi K."/>
            <person name="Sato H."/>
            <person name="Nagai K."/>
            <person name="Kimura K."/>
            <person name="Makita H."/>
            <person name="Sekine M."/>
            <person name="Obayashi M."/>
            <person name="Nishi T."/>
            <person name="Shibahara T."/>
            <person name="Tanaka T."/>
            <person name="Ishii S."/>
            <person name="Yamamoto J."/>
            <person name="Saito K."/>
            <person name="Kawai Y."/>
            <person name="Isono Y."/>
            <person name="Nakamura Y."/>
            <person name="Nagahari K."/>
            <person name="Murakami K."/>
            <person name="Yasuda T."/>
            <person name="Iwayanagi T."/>
            <person name="Wagatsuma M."/>
            <person name="Shiratori A."/>
            <person name="Sudo H."/>
            <person name="Hosoiri T."/>
            <person name="Kaku Y."/>
            <person name="Kodaira H."/>
            <person name="Kondo H."/>
            <person name="Sugawara M."/>
            <person name="Takahashi M."/>
            <person name="Kanda K."/>
            <person name="Yokoi T."/>
            <person name="Furuya T."/>
            <person name="Kikkawa E."/>
            <person name="Omura Y."/>
            <person name="Abe K."/>
            <person name="Kamihara K."/>
            <person name="Katsuta N."/>
            <person name="Sato K."/>
            <person name="Tanikawa M."/>
            <person name="Yamazaki M."/>
            <person name="Ninomiya K."/>
            <person name="Ishibashi T."/>
            <person name="Yamashita H."/>
            <person name="Murakawa K."/>
            <person name="Fujimori K."/>
            <person name="Tanai H."/>
            <person name="Kimata M."/>
            <person name="Watanabe M."/>
            <person name="Hiraoka S."/>
            <person name="Chiba Y."/>
            <person name="Ishida S."/>
            <person name="Ono Y."/>
            <person name="Takiguchi S."/>
            <person name="Watanabe S."/>
            <person name="Yosida M."/>
            <person name="Hotuta T."/>
            <person name="Kusano J."/>
            <person name="Kanehori K."/>
            <person name="Takahashi-Fujii A."/>
            <person name="Hara H."/>
            <person name="Tanase T.-O."/>
            <person name="Nomura Y."/>
            <person name="Togiya S."/>
            <person name="Komai F."/>
            <person name="Hara R."/>
            <person name="Takeuchi K."/>
            <person name="Arita M."/>
            <person name="Imose N."/>
            <person name="Musashino K."/>
            <person name="Yuuki H."/>
            <person name="Oshima A."/>
            <person name="Sasaki N."/>
            <person name="Aotsuka S."/>
            <person name="Yoshikawa Y."/>
            <person name="Matsunawa H."/>
            <person name="Ichihara T."/>
            <person name="Shiohata N."/>
            <person name="Sano S."/>
            <person name="Moriya S."/>
            <person name="Momiyama H."/>
            <person name="Satoh N."/>
            <person name="Takami S."/>
            <person name="Terashima Y."/>
            <person name="Suzuki O."/>
            <person name="Nakagawa S."/>
            <person name="Senoh A."/>
            <person name="Mizoguchi H."/>
            <person name="Goto Y."/>
            <person name="Shimizu F."/>
            <person name="Wakebe H."/>
            <person name="Hishigaki H."/>
            <person name="Watanabe T."/>
            <person name="Sugiyama A."/>
            <person name="Takemoto M."/>
            <person name="Kawakami B."/>
            <person name="Yamazaki M."/>
            <person name="Watanabe K."/>
            <person name="Kumagai A."/>
            <person name="Itakura S."/>
            <person name="Fukuzumi Y."/>
            <person name="Fujimori Y."/>
            <person name="Komiyama M."/>
            <person name="Tashiro H."/>
            <person name="Tanigami A."/>
            <person name="Fujiwara T."/>
            <person name="Ono T."/>
            <person name="Yamada K."/>
            <person name="Fujii Y."/>
            <person name="Ozaki K."/>
            <person name="Hirao M."/>
            <person name="Ohmori Y."/>
            <person name="Kawabata A."/>
            <person name="Hikiji T."/>
            <person name="Kobatake N."/>
            <person name="Inagaki H."/>
            <person name="Ikema Y."/>
            <person name="Okamoto S."/>
            <person name="Okitani R."/>
            <person name="Kawakami T."/>
            <person name="Noguchi S."/>
            <person name="Itoh T."/>
            <person name="Shigeta K."/>
            <person name="Senba T."/>
            <person name="Matsumura K."/>
            <person name="Nakajima Y."/>
            <person name="Mizuno T."/>
            <person name="Morinaga M."/>
            <person name="Sasaki M."/>
            <person name="Togashi T."/>
            <person name="Oyama M."/>
            <person name="Hata H."/>
            <person name="Watanabe M."/>
            <person name="Komatsu T."/>
            <person name="Mizushima-Sugano J."/>
            <person name="Satoh T."/>
            <person name="Shirai Y."/>
            <person name="Takahashi Y."/>
            <person name="Nakagawa K."/>
            <person name="Okumura K."/>
            <person name="Nagase T."/>
            <person name="Nomura N."/>
            <person name="Kikuchi H."/>
            <person name="Masuho Y."/>
            <person name="Yamashita R."/>
            <person name="Nakai K."/>
            <person name="Yada T."/>
            <person name="Nakamura Y."/>
            <person name="Ohara O."/>
            <person name="Isogai T."/>
            <person name="Sugano S."/>
        </authorList>
    </citation>
    <scope>NUCLEOTIDE SEQUENCE [LARGE SCALE MRNA] (ISOFORM 1)</scope>
    <source>
        <tissue>Placenta</tissue>
    </source>
</reference>
<reference key="2">
    <citation type="journal article" date="2003" name="Nature">
        <title>The DNA sequence and analysis of human chromosome 6.</title>
        <authorList>
            <person name="Mungall A.J."/>
            <person name="Palmer S.A."/>
            <person name="Sims S.K."/>
            <person name="Edwards C.A."/>
            <person name="Ashurst J.L."/>
            <person name="Wilming L."/>
            <person name="Jones M.C."/>
            <person name="Horton R."/>
            <person name="Hunt S.E."/>
            <person name="Scott C.E."/>
            <person name="Gilbert J.G.R."/>
            <person name="Clamp M.E."/>
            <person name="Bethel G."/>
            <person name="Milne S."/>
            <person name="Ainscough R."/>
            <person name="Almeida J.P."/>
            <person name="Ambrose K.D."/>
            <person name="Andrews T.D."/>
            <person name="Ashwell R.I.S."/>
            <person name="Babbage A.K."/>
            <person name="Bagguley C.L."/>
            <person name="Bailey J."/>
            <person name="Banerjee R."/>
            <person name="Barker D.J."/>
            <person name="Barlow K.F."/>
            <person name="Bates K."/>
            <person name="Beare D.M."/>
            <person name="Beasley H."/>
            <person name="Beasley O."/>
            <person name="Bird C.P."/>
            <person name="Blakey S.E."/>
            <person name="Bray-Allen S."/>
            <person name="Brook J."/>
            <person name="Brown A.J."/>
            <person name="Brown J.Y."/>
            <person name="Burford D.C."/>
            <person name="Burrill W."/>
            <person name="Burton J."/>
            <person name="Carder C."/>
            <person name="Carter N.P."/>
            <person name="Chapman J.C."/>
            <person name="Clark S.Y."/>
            <person name="Clark G."/>
            <person name="Clee C.M."/>
            <person name="Clegg S."/>
            <person name="Cobley V."/>
            <person name="Collier R.E."/>
            <person name="Collins J.E."/>
            <person name="Colman L.K."/>
            <person name="Corby N.R."/>
            <person name="Coville G.J."/>
            <person name="Culley K.M."/>
            <person name="Dhami P."/>
            <person name="Davies J."/>
            <person name="Dunn M."/>
            <person name="Earthrowl M.E."/>
            <person name="Ellington A.E."/>
            <person name="Evans K.A."/>
            <person name="Faulkner L."/>
            <person name="Francis M.D."/>
            <person name="Frankish A."/>
            <person name="Frankland J."/>
            <person name="French L."/>
            <person name="Garner P."/>
            <person name="Garnett J."/>
            <person name="Ghori M.J."/>
            <person name="Gilby L.M."/>
            <person name="Gillson C.J."/>
            <person name="Glithero R.J."/>
            <person name="Grafham D.V."/>
            <person name="Grant M."/>
            <person name="Gribble S."/>
            <person name="Griffiths C."/>
            <person name="Griffiths M.N.D."/>
            <person name="Hall R."/>
            <person name="Halls K.S."/>
            <person name="Hammond S."/>
            <person name="Harley J.L."/>
            <person name="Hart E.A."/>
            <person name="Heath P.D."/>
            <person name="Heathcott R."/>
            <person name="Holmes S.J."/>
            <person name="Howden P.J."/>
            <person name="Howe K.L."/>
            <person name="Howell G.R."/>
            <person name="Huckle E."/>
            <person name="Humphray S.J."/>
            <person name="Humphries M.D."/>
            <person name="Hunt A.R."/>
            <person name="Johnson C.M."/>
            <person name="Joy A.A."/>
            <person name="Kay M."/>
            <person name="Keenan S.J."/>
            <person name="Kimberley A.M."/>
            <person name="King A."/>
            <person name="Laird G.K."/>
            <person name="Langford C."/>
            <person name="Lawlor S."/>
            <person name="Leongamornlert D.A."/>
            <person name="Leversha M."/>
            <person name="Lloyd C.R."/>
            <person name="Lloyd D.M."/>
            <person name="Loveland J.E."/>
            <person name="Lovell J."/>
            <person name="Martin S."/>
            <person name="Mashreghi-Mohammadi M."/>
            <person name="Maslen G.L."/>
            <person name="Matthews L."/>
            <person name="McCann O.T."/>
            <person name="McLaren S.J."/>
            <person name="McLay K."/>
            <person name="McMurray A."/>
            <person name="Moore M.J.F."/>
            <person name="Mullikin J.C."/>
            <person name="Niblett D."/>
            <person name="Nickerson T."/>
            <person name="Novik K.L."/>
            <person name="Oliver K."/>
            <person name="Overton-Larty E.K."/>
            <person name="Parker A."/>
            <person name="Patel R."/>
            <person name="Pearce A.V."/>
            <person name="Peck A.I."/>
            <person name="Phillimore B.J.C.T."/>
            <person name="Phillips S."/>
            <person name="Plumb R.W."/>
            <person name="Porter K.M."/>
            <person name="Ramsey Y."/>
            <person name="Ranby S.A."/>
            <person name="Rice C.M."/>
            <person name="Ross M.T."/>
            <person name="Searle S.M."/>
            <person name="Sehra H.K."/>
            <person name="Sheridan E."/>
            <person name="Skuce C.D."/>
            <person name="Smith S."/>
            <person name="Smith M."/>
            <person name="Spraggon L."/>
            <person name="Squares S.L."/>
            <person name="Steward C.A."/>
            <person name="Sycamore N."/>
            <person name="Tamlyn-Hall G."/>
            <person name="Tester J."/>
            <person name="Theaker A.J."/>
            <person name="Thomas D.W."/>
            <person name="Thorpe A."/>
            <person name="Tracey A."/>
            <person name="Tromans A."/>
            <person name="Tubby B."/>
            <person name="Wall M."/>
            <person name="Wallis J.M."/>
            <person name="West A.P."/>
            <person name="White S.S."/>
            <person name="Whitehead S.L."/>
            <person name="Whittaker H."/>
            <person name="Wild A."/>
            <person name="Willey D.J."/>
            <person name="Wilmer T.E."/>
            <person name="Wood J.M."/>
            <person name="Wray P.W."/>
            <person name="Wyatt J.C."/>
            <person name="Young L."/>
            <person name="Younger R.M."/>
            <person name="Bentley D.R."/>
            <person name="Coulson A."/>
            <person name="Durbin R.M."/>
            <person name="Hubbard T."/>
            <person name="Sulston J.E."/>
            <person name="Dunham I."/>
            <person name="Rogers J."/>
            <person name="Beck S."/>
        </authorList>
    </citation>
    <scope>NUCLEOTIDE SEQUENCE [LARGE SCALE GENOMIC DNA]</scope>
</reference>
<reference key="3">
    <citation type="journal article" date="2004" name="Genome Res.">
        <title>The status, quality, and expansion of the NIH full-length cDNA project: the Mammalian Gene Collection (MGC).</title>
        <authorList>
            <consortium name="The MGC Project Team"/>
        </authorList>
    </citation>
    <scope>NUCLEOTIDE SEQUENCE [LARGE SCALE MRNA] (ISOFORMS 1 AND 3)</scope>
    <scope>VARIANT THR-543</scope>
    <source>
        <tissue>Eye</tissue>
        <tissue>Testis</tissue>
    </source>
</reference>
<reference key="4">
    <citation type="journal article" date="2013" name="Mol. Genet. Metab.">
        <title>Exome sequencing identifies a new mutation in SERAC1 in a patient with 3-methylglutaconic aciduria.</title>
        <authorList>
            <person name="Tort F."/>
            <person name="Garcia-Silva M.T."/>
            <person name="Ferrer-Cortes X."/>
            <person name="Navarro-Sastre A."/>
            <person name="Garcia-Villoria J."/>
            <person name="Coll M.J."/>
            <person name="Vidal E."/>
            <person name="Jimenez-Almazan J."/>
            <person name="Dopazo J."/>
            <person name="Briones P."/>
            <person name="Elpeleg O."/>
            <person name="Ribes A."/>
        </authorList>
    </citation>
    <scope>INVOLVEMENT IN MEGDEL</scope>
</reference>
<reference key="5">
    <citation type="journal article" date="2012" name="Nat. Genet.">
        <title>Mutations in the phospholipid remodeling gene SERAC1 impair mitochondrial function and intracellular cholesterol trafficking and cause dystonia and deafness.</title>
        <authorList>
            <person name="Wortmann S.B."/>
            <person name="Vaz F.M."/>
            <person name="Gardeitchik T."/>
            <person name="Vissers L.E."/>
            <person name="Renkema G.H."/>
            <person name="Schuurs-Hoeijmakers J.H."/>
            <person name="Kulik W."/>
            <person name="Lammens M."/>
            <person name="Christin C."/>
            <person name="Kluijtmans L.A."/>
            <person name="Rodenburg R.J."/>
            <person name="Nijtmans L.G."/>
            <person name="Grunewald A."/>
            <person name="Klein C."/>
            <person name="Gerhold J.M."/>
            <person name="Kozicz T."/>
            <person name="van Hasselt P.M."/>
            <person name="Harakalova M."/>
            <person name="Kloosterman W."/>
            <person name="Baric I."/>
            <person name="Pronicka E."/>
            <person name="Ucar S.K."/>
            <person name="Naess K."/>
            <person name="Singhal K.K."/>
            <person name="Krumina Z."/>
            <person name="Gilissen C."/>
            <person name="van Bokhoven H."/>
            <person name="Veltman J.A."/>
            <person name="Smeitink J.A."/>
            <person name="Lefeber D.J."/>
            <person name="Spelbrink J.N."/>
            <person name="Wevers R.A."/>
            <person name="Morava E."/>
            <person name="de Brouwer A.P."/>
        </authorList>
    </citation>
    <scope>VARIANTS MEGDEL ASP-401; GLU-404; LEU-479 DEL AND THR-498</scope>
    <scope>FUNCTION</scope>
    <scope>SUBCELLULAR LOCATION</scope>
    <scope>TISSUE SPECIFICITY</scope>
</reference>
<reference key="6">
    <citation type="journal article" date="2022" name="Sci. Transl. Med.">
        <title>SERAC1 is a component of the mitochondrial serine transporter complex required for the maintenance of mitochondrial DNA.</title>
        <authorList>
            <person name="Fang H."/>
            <person name="Xie A."/>
            <person name="Du M."/>
            <person name="Li X."/>
            <person name="Yang K."/>
            <person name="Fu Y."/>
            <person name="Yuan X."/>
            <person name="Fan R."/>
            <person name="Yu W."/>
            <person name="Zhou Z."/>
            <person name="Sang T."/>
            <person name="Nie K."/>
            <person name="Li J."/>
            <person name="Zhao Q."/>
            <person name="Chen Z."/>
            <person name="Yang Y."/>
            <person name="Hong C."/>
            <person name="Lyu J."/>
        </authorList>
    </citation>
    <scope>FUNCTION</scope>
    <scope>TISSUE SPECIFICITY</scope>
</reference>
<reference key="7">
    <citation type="journal article" date="2018" name="Eur. J. Med. Genet.">
        <title>Novel mutations in SERAC1 gene in two Indian patients presenting with dystonia and intellectual disability.</title>
        <authorList>
            <person name="Radha Rama Devi A."/>
            <person name="Lingappa L."/>
        </authorList>
    </citation>
    <scope>VARIANT MEGDEL GLU-526</scope>
</reference>
<dbReference type="EMBL" id="AK027823">
    <property type="protein sequence ID" value="BAB55393.1"/>
    <property type="molecule type" value="mRNA"/>
</dbReference>
<dbReference type="EMBL" id="AL135907">
    <property type="status" value="NOT_ANNOTATED_CDS"/>
    <property type="molecule type" value="Genomic_DNA"/>
</dbReference>
<dbReference type="EMBL" id="AL590703">
    <property type="status" value="NOT_ANNOTATED_CDS"/>
    <property type="molecule type" value="Genomic_DNA"/>
</dbReference>
<dbReference type="EMBL" id="BC001705">
    <property type="protein sequence ID" value="AAH01705.1"/>
    <property type="molecule type" value="mRNA"/>
</dbReference>
<dbReference type="EMBL" id="BC028594">
    <property type="protein sequence ID" value="AAH28594.1"/>
    <property type="molecule type" value="mRNA"/>
</dbReference>
<dbReference type="CCDS" id="CCDS5255.1">
    <molecule id="Q96JX3-1"/>
</dbReference>
<dbReference type="RefSeq" id="NP_116250.3">
    <molecule id="Q96JX3-1"/>
    <property type="nucleotide sequence ID" value="NM_032861.3"/>
</dbReference>
<dbReference type="RefSeq" id="XP_024302341.1">
    <molecule id="Q96JX3-1"/>
    <property type="nucleotide sequence ID" value="XM_024446573.2"/>
</dbReference>
<dbReference type="RefSeq" id="XP_054212573.1">
    <molecule id="Q96JX3-1"/>
    <property type="nucleotide sequence ID" value="XM_054356598.1"/>
</dbReference>
<dbReference type="BioGRID" id="124380">
    <property type="interactions" value="22"/>
</dbReference>
<dbReference type="FunCoup" id="Q96JX3">
    <property type="interactions" value="1507"/>
</dbReference>
<dbReference type="IntAct" id="Q96JX3">
    <property type="interactions" value="10"/>
</dbReference>
<dbReference type="MINT" id="Q96JX3"/>
<dbReference type="STRING" id="9606.ENSP00000496731"/>
<dbReference type="ESTHER" id="human-SERAC1">
    <property type="family name" value="SERAC1"/>
</dbReference>
<dbReference type="GlyGen" id="Q96JX3">
    <property type="glycosylation" value="1 site, 1 N-linked glycan (1 site)"/>
</dbReference>
<dbReference type="iPTMnet" id="Q96JX3"/>
<dbReference type="PhosphoSitePlus" id="Q96JX3"/>
<dbReference type="BioMuta" id="SERAC1"/>
<dbReference type="DMDM" id="74751971"/>
<dbReference type="jPOST" id="Q96JX3"/>
<dbReference type="MassIVE" id="Q96JX3"/>
<dbReference type="PaxDb" id="9606-ENSP00000356071"/>
<dbReference type="PeptideAtlas" id="Q96JX3"/>
<dbReference type="ProteomicsDB" id="77011">
    <molecule id="Q96JX3-1"/>
</dbReference>
<dbReference type="ProteomicsDB" id="77012">
    <molecule id="Q96JX3-2"/>
</dbReference>
<dbReference type="ProteomicsDB" id="77013">
    <molecule id="Q96JX3-3"/>
</dbReference>
<dbReference type="Pumba" id="Q96JX3"/>
<dbReference type="Antibodypedia" id="20005">
    <property type="antibodies" value="96 antibodies from 21 providers"/>
</dbReference>
<dbReference type="DNASU" id="84947"/>
<dbReference type="Ensembl" id="ENST00000367101.5">
    <molecule id="Q96JX3-2"/>
    <property type="protein sequence ID" value="ENSP00000356068.1"/>
    <property type="gene ID" value="ENSG00000122335.17"/>
</dbReference>
<dbReference type="Ensembl" id="ENST00000647468.2">
    <molecule id="Q96JX3-1"/>
    <property type="protein sequence ID" value="ENSP00000496731.1"/>
    <property type="gene ID" value="ENSG00000122335.17"/>
</dbReference>
<dbReference type="GeneID" id="84947"/>
<dbReference type="KEGG" id="hsa:84947"/>
<dbReference type="MANE-Select" id="ENST00000647468.2">
    <property type="protein sequence ID" value="ENSP00000496731.1"/>
    <property type="RefSeq nucleotide sequence ID" value="NM_032861.4"/>
    <property type="RefSeq protein sequence ID" value="NP_116250.3"/>
</dbReference>
<dbReference type="UCSC" id="uc003qrc.3">
    <molecule id="Q96JX3-1"/>
    <property type="organism name" value="human"/>
</dbReference>
<dbReference type="AGR" id="HGNC:21061"/>
<dbReference type="CTD" id="84947"/>
<dbReference type="DisGeNET" id="84947"/>
<dbReference type="GeneCards" id="SERAC1"/>
<dbReference type="GeneReviews" id="SERAC1"/>
<dbReference type="HGNC" id="HGNC:21061">
    <property type="gene designation" value="SERAC1"/>
</dbReference>
<dbReference type="HPA" id="ENSG00000122335">
    <property type="expression patterns" value="Low tissue specificity"/>
</dbReference>
<dbReference type="MalaCards" id="SERAC1"/>
<dbReference type="MIM" id="614725">
    <property type="type" value="gene"/>
</dbReference>
<dbReference type="MIM" id="614739">
    <property type="type" value="phenotype"/>
</dbReference>
<dbReference type="neXtProt" id="NX_Q96JX3"/>
<dbReference type="OpenTargets" id="ENSG00000122335"/>
<dbReference type="Orphanet" id="352328">
    <property type="disease" value="MEGDEL syndrome"/>
</dbReference>
<dbReference type="PharmGKB" id="PA134951844"/>
<dbReference type="VEuPathDB" id="HostDB:ENSG00000122335"/>
<dbReference type="eggNOG" id="KOG2029">
    <property type="taxonomic scope" value="Eukaryota"/>
</dbReference>
<dbReference type="GeneTree" id="ENSGT00390000003560"/>
<dbReference type="HOGENOM" id="CLU_023317_1_0_1"/>
<dbReference type="InParanoid" id="Q96JX3"/>
<dbReference type="OMA" id="RRTEYIY"/>
<dbReference type="OrthoDB" id="5086500at2759"/>
<dbReference type="PAN-GO" id="Q96JX3">
    <property type="GO annotations" value="2 GO annotations based on evolutionary models"/>
</dbReference>
<dbReference type="PhylomeDB" id="Q96JX3"/>
<dbReference type="TreeFam" id="TF319689"/>
<dbReference type="PathwayCommons" id="Q96JX3"/>
<dbReference type="SignaLink" id="Q96JX3"/>
<dbReference type="BioGRID-ORCS" id="84947">
    <property type="hits" value="17 hits in 1153 CRISPR screens"/>
</dbReference>
<dbReference type="ChiTaRS" id="SERAC1">
    <property type="organism name" value="human"/>
</dbReference>
<dbReference type="GeneWiki" id="SERAC1"/>
<dbReference type="GenomeRNAi" id="84947"/>
<dbReference type="Pharos" id="Q96JX3">
    <property type="development level" value="Tbio"/>
</dbReference>
<dbReference type="PRO" id="PR:Q96JX3"/>
<dbReference type="Proteomes" id="UP000005640">
    <property type="component" value="Chromosome 6"/>
</dbReference>
<dbReference type="RNAct" id="Q96JX3">
    <property type="molecule type" value="protein"/>
</dbReference>
<dbReference type="Bgee" id="ENSG00000122335">
    <property type="expression patterns" value="Expressed in endothelial cell and 148 other cell types or tissues"/>
</dbReference>
<dbReference type="ExpressionAtlas" id="Q96JX3">
    <property type="expression patterns" value="baseline and differential"/>
</dbReference>
<dbReference type="GO" id="GO:0005783">
    <property type="term" value="C:endoplasmic reticulum"/>
    <property type="evidence" value="ECO:0000314"/>
    <property type="project" value="UniProtKB"/>
</dbReference>
<dbReference type="GO" id="GO:0005789">
    <property type="term" value="C:endoplasmic reticulum membrane"/>
    <property type="evidence" value="ECO:0007669"/>
    <property type="project" value="Ensembl"/>
</dbReference>
<dbReference type="GO" id="GO:0031012">
    <property type="term" value="C:extracellular matrix"/>
    <property type="evidence" value="ECO:0007669"/>
    <property type="project" value="Ensembl"/>
</dbReference>
<dbReference type="GO" id="GO:0044233">
    <property type="term" value="C:mitochondria-associated endoplasmic reticulum membrane contact site"/>
    <property type="evidence" value="ECO:0000314"/>
    <property type="project" value="UniProtKB"/>
</dbReference>
<dbReference type="GO" id="GO:0005741">
    <property type="term" value="C:mitochondrial outer membrane"/>
    <property type="evidence" value="ECO:0007669"/>
    <property type="project" value="Ensembl"/>
</dbReference>
<dbReference type="GO" id="GO:0005739">
    <property type="term" value="C:mitochondrion"/>
    <property type="evidence" value="ECO:0000314"/>
    <property type="project" value="UniProtKB"/>
</dbReference>
<dbReference type="GO" id="GO:0030198">
    <property type="term" value="P:extracellular matrix organization"/>
    <property type="evidence" value="ECO:0007669"/>
    <property type="project" value="Ensembl"/>
</dbReference>
<dbReference type="GO" id="GO:0032367">
    <property type="term" value="P:intracellular cholesterol transport"/>
    <property type="evidence" value="ECO:0000315"/>
    <property type="project" value="UniProtKB"/>
</dbReference>
<dbReference type="GO" id="GO:0036148">
    <property type="term" value="P:phosphatidylglycerol acyl-chain remodeling"/>
    <property type="evidence" value="ECO:0000315"/>
    <property type="project" value="UniProtKB"/>
</dbReference>
<dbReference type="GO" id="GO:0008654">
    <property type="term" value="P:phospholipid biosynthetic process"/>
    <property type="evidence" value="ECO:0007669"/>
    <property type="project" value="UniProtKB-KW"/>
</dbReference>
<dbReference type="FunFam" id="1.25.10.10:FF:000791">
    <property type="entry name" value="SERAC1 isoform 1"/>
    <property type="match status" value="1"/>
</dbReference>
<dbReference type="FunFam" id="3.40.50.1820:FF:000088">
    <property type="entry name" value="SERAC1 isoform 1"/>
    <property type="match status" value="1"/>
</dbReference>
<dbReference type="Gene3D" id="3.40.50.1820">
    <property type="entry name" value="alpha/beta hydrolase"/>
    <property type="match status" value="1"/>
</dbReference>
<dbReference type="Gene3D" id="1.25.10.10">
    <property type="entry name" value="Leucine-rich Repeat Variant"/>
    <property type="match status" value="1"/>
</dbReference>
<dbReference type="InterPro" id="IPR029058">
    <property type="entry name" value="AB_hydrolase_fold"/>
</dbReference>
<dbReference type="InterPro" id="IPR011989">
    <property type="entry name" value="ARM-like"/>
</dbReference>
<dbReference type="InterPro" id="IPR016024">
    <property type="entry name" value="ARM-type_fold"/>
</dbReference>
<dbReference type="InterPro" id="IPR052374">
    <property type="entry name" value="SERAC1"/>
</dbReference>
<dbReference type="PANTHER" id="PTHR48182">
    <property type="entry name" value="PROTEIN SERAC1"/>
    <property type="match status" value="1"/>
</dbReference>
<dbReference type="PANTHER" id="PTHR48182:SF2">
    <property type="entry name" value="PROTEIN SERAC1"/>
    <property type="match status" value="1"/>
</dbReference>
<dbReference type="SUPFAM" id="SSF53474">
    <property type="entry name" value="alpha/beta-Hydrolases"/>
    <property type="match status" value="1"/>
</dbReference>
<dbReference type="SUPFAM" id="SSF48371">
    <property type="entry name" value="ARM repeat"/>
    <property type="match status" value="1"/>
</dbReference>
<organism>
    <name type="scientific">Homo sapiens</name>
    <name type="common">Human</name>
    <dbReference type="NCBI Taxonomy" id="9606"/>
    <lineage>
        <taxon>Eukaryota</taxon>
        <taxon>Metazoa</taxon>
        <taxon>Chordata</taxon>
        <taxon>Craniata</taxon>
        <taxon>Vertebrata</taxon>
        <taxon>Euteleostomi</taxon>
        <taxon>Mammalia</taxon>
        <taxon>Eutheria</taxon>
        <taxon>Euarchontoglires</taxon>
        <taxon>Primates</taxon>
        <taxon>Haplorrhini</taxon>
        <taxon>Catarrhini</taxon>
        <taxon>Hominidae</taxon>
        <taxon>Homo</taxon>
    </lineage>
</organism>
<feature type="chain" id="PRO_0000274671" description="Protein SERAC1">
    <location>
        <begin position="1"/>
        <end position="654"/>
    </location>
</feature>
<feature type="transmembrane region" description="Helical" evidence="2">
    <location>
        <begin position="32"/>
        <end position="54"/>
    </location>
</feature>
<feature type="splice variant" id="VSP_022857" description="In isoform 3." evidence="8">
    <original>DYQYR</original>
    <variation>GNETT</variation>
    <location>
        <begin position="163"/>
        <end position="167"/>
    </location>
</feature>
<feature type="splice variant" id="VSP_022858" description="In isoform 3." evidence="8">
    <location>
        <begin position="168"/>
        <end position="654"/>
    </location>
</feature>
<feature type="splice variant" id="VSP_022859" description="In isoform 2." evidence="9">
    <original>KSIAFRSNELLRKLRAAGVGDRPVVWISHSMGGLLVKKMLLEASTKPEMSTVINNTRGIIFYS</original>
    <variation>RSLLSISSGIVEGLESPLHSEATNFLGSSELLVLGIGQWFGYHIAWEVFLSKRCCWKPLRSQK</variation>
    <location>
        <begin position="469"/>
        <end position="531"/>
    </location>
</feature>
<feature type="splice variant" id="VSP_022860" description="In isoform 2." evidence="9">
    <location>
        <begin position="532"/>
        <end position="654"/>
    </location>
</feature>
<feature type="sequence variant" id="VAR_068442" description="In MEGDEL." evidence="4">
    <original>G</original>
    <variation>D</variation>
    <location>
        <position position="401"/>
    </location>
</feature>
<feature type="sequence variant" id="VAR_068443" description="In MEGDEL." evidence="4">
    <original>G</original>
    <variation>E</variation>
    <location>
        <position position="404"/>
    </location>
</feature>
<feature type="sequence variant" id="VAR_068444" description="In MEGDEL; dbSNP:rs1199625391." evidence="4">
    <location>
        <position position="479"/>
    </location>
</feature>
<feature type="sequence variant" id="VAR_068445" description="In MEGDEL; dbSNP:rs201941476." evidence="4">
    <original>S</original>
    <variation>T</variation>
    <location>
        <position position="498"/>
    </location>
</feature>
<feature type="sequence variant" id="VAR_080230" description="In MEGDEL; uncertain significance; dbSNP:rs1554261079." evidence="6">
    <original>G</original>
    <variation>E</variation>
    <location>
        <position position="526"/>
    </location>
</feature>
<feature type="sequence variant" id="VAR_030342" description="In dbSNP:rs17849527." evidence="3">
    <original>S</original>
    <variation>T</variation>
    <location>
        <position position="543"/>
    </location>
</feature>
<feature type="sequence conflict" description="In Ref. 3; AAH28594." evidence="9" ref="3">
    <original>F</original>
    <variation>L</variation>
    <location>
        <position position="47"/>
    </location>
</feature>
<name>SRAC1_HUMAN</name>
<protein>
    <recommendedName>
        <fullName>Protein SERAC1</fullName>
    </recommendedName>
    <alternativeName>
        <fullName>Serine active site-containing protein 1</fullName>
    </alternativeName>
</protein>